<keyword id="KW-0106">Calcium</keyword>
<keyword id="KW-0479">Metal-binding</keyword>
<keyword id="KW-1185">Reference proteome</keyword>
<keyword id="KW-0677">Repeat</keyword>
<accession>Q8RYK0</accession>
<comment type="function">
    <text evidence="1">Potential calcium sensor.</text>
</comment>
<comment type="caution">
    <text evidence="3">Although assigned as a calmodulin family member by PubMed:17263873, it only contains EF-hand domains.</text>
</comment>
<feature type="chain" id="PRO_0000338445" description="Probable calcium-binding protein CML31">
    <location>
        <begin position="1"/>
        <end position="151"/>
    </location>
</feature>
<feature type="domain" description="EF-hand 1" evidence="2">
    <location>
        <begin position="14"/>
        <end position="42"/>
    </location>
</feature>
<feature type="domain" description="EF-hand 2" evidence="2">
    <location>
        <begin position="44"/>
        <end position="79"/>
    </location>
</feature>
<feature type="domain" description="EF-hand 3" evidence="2">
    <location>
        <begin position="84"/>
        <end position="119"/>
    </location>
</feature>
<feature type="domain" description="EF-hand 4" evidence="2">
    <location>
        <begin position="120"/>
        <end position="151"/>
    </location>
</feature>
<feature type="binding site" evidence="2">
    <location>
        <position position="20"/>
    </location>
    <ligand>
        <name>Ca(2+)</name>
        <dbReference type="ChEBI" id="CHEBI:29108"/>
        <label>1</label>
    </ligand>
</feature>
<feature type="binding site" evidence="2">
    <location>
        <position position="22"/>
    </location>
    <ligand>
        <name>Ca(2+)</name>
        <dbReference type="ChEBI" id="CHEBI:29108"/>
        <label>1</label>
    </ligand>
</feature>
<feature type="binding site" evidence="2">
    <location>
        <position position="24"/>
    </location>
    <ligand>
        <name>Ca(2+)</name>
        <dbReference type="ChEBI" id="CHEBI:29108"/>
        <label>1</label>
    </ligand>
</feature>
<feature type="binding site" evidence="2">
    <location>
        <position position="26"/>
    </location>
    <ligand>
        <name>Ca(2+)</name>
        <dbReference type="ChEBI" id="CHEBI:29108"/>
        <label>1</label>
    </ligand>
</feature>
<feature type="binding site" evidence="2">
    <location>
        <position position="31"/>
    </location>
    <ligand>
        <name>Ca(2+)</name>
        <dbReference type="ChEBI" id="CHEBI:29108"/>
        <label>1</label>
    </ligand>
</feature>
<feature type="binding site" evidence="2">
    <location>
        <position position="57"/>
    </location>
    <ligand>
        <name>Ca(2+)</name>
        <dbReference type="ChEBI" id="CHEBI:29108"/>
        <label>2</label>
    </ligand>
</feature>
<feature type="binding site" evidence="2">
    <location>
        <position position="59"/>
    </location>
    <ligand>
        <name>Ca(2+)</name>
        <dbReference type="ChEBI" id="CHEBI:29108"/>
        <label>2</label>
    </ligand>
</feature>
<feature type="binding site" evidence="2">
    <location>
        <position position="61"/>
    </location>
    <ligand>
        <name>Ca(2+)</name>
        <dbReference type="ChEBI" id="CHEBI:29108"/>
        <label>2</label>
    </ligand>
</feature>
<feature type="binding site" evidence="2">
    <location>
        <position position="68"/>
    </location>
    <ligand>
        <name>Ca(2+)</name>
        <dbReference type="ChEBI" id="CHEBI:29108"/>
        <label>2</label>
    </ligand>
</feature>
<feature type="binding site" evidence="2">
    <location>
        <position position="133"/>
    </location>
    <ligand>
        <name>Ca(2+)</name>
        <dbReference type="ChEBI" id="CHEBI:29108"/>
        <label>3</label>
    </ligand>
</feature>
<feature type="binding site" evidence="2">
    <location>
        <position position="135"/>
    </location>
    <ligand>
        <name>Ca(2+)</name>
        <dbReference type="ChEBI" id="CHEBI:29108"/>
        <label>3</label>
    </ligand>
</feature>
<feature type="binding site" evidence="2">
    <location>
        <position position="137"/>
    </location>
    <ligand>
        <name>Ca(2+)</name>
        <dbReference type="ChEBI" id="CHEBI:29108"/>
        <label>3</label>
    </ligand>
</feature>
<feature type="binding site" evidence="2">
    <location>
        <position position="144"/>
    </location>
    <ligand>
        <name>Ca(2+)</name>
        <dbReference type="ChEBI" id="CHEBI:29108"/>
        <label>3</label>
    </ligand>
</feature>
<proteinExistence type="evidence at transcript level"/>
<evidence type="ECO:0000250" key="1"/>
<evidence type="ECO:0000255" key="2">
    <source>
        <dbReference type="PROSITE-ProRule" id="PRU00448"/>
    </source>
</evidence>
<evidence type="ECO:0000305" key="3"/>
<protein>
    <recommendedName>
        <fullName>Probable calcium-binding protein CML31</fullName>
    </recommendedName>
    <alternativeName>
        <fullName>Calmodulin-like protein 31</fullName>
    </alternativeName>
</protein>
<dbReference type="EMBL" id="AP004368">
    <property type="protein sequence ID" value="BAB90781.1"/>
    <property type="molecule type" value="Genomic_DNA"/>
</dbReference>
<dbReference type="EMBL" id="AP008207">
    <property type="protein sequence ID" value="BAF07350.1"/>
    <property type="molecule type" value="Genomic_DNA"/>
</dbReference>
<dbReference type="EMBL" id="AP014957">
    <property type="status" value="NOT_ANNOTATED_CDS"/>
    <property type="molecule type" value="Genomic_DNA"/>
</dbReference>
<dbReference type="EMBL" id="AK062671">
    <property type="status" value="NOT_ANNOTATED_CDS"/>
    <property type="molecule type" value="mRNA"/>
</dbReference>
<dbReference type="RefSeq" id="XP_015631059.1">
    <property type="nucleotide sequence ID" value="XM_015775573.1"/>
</dbReference>
<dbReference type="SMR" id="Q8RYK0"/>
<dbReference type="FunCoup" id="Q8RYK0">
    <property type="interactions" value="175"/>
</dbReference>
<dbReference type="STRING" id="39947.Q8RYK0"/>
<dbReference type="PaxDb" id="39947-Q8RYK0"/>
<dbReference type="EnsemblPlants" id="Os01t0955100-01">
    <property type="protein sequence ID" value="Os01t0955100-01"/>
    <property type="gene ID" value="Os01g0955100"/>
</dbReference>
<dbReference type="Gramene" id="Os01t0955100-01">
    <property type="protein sequence ID" value="Os01t0955100-01"/>
    <property type="gene ID" value="Os01g0955100"/>
</dbReference>
<dbReference type="KEGG" id="dosa:Os01g0955100"/>
<dbReference type="eggNOG" id="KOG0027">
    <property type="taxonomic scope" value="Eukaryota"/>
</dbReference>
<dbReference type="HOGENOM" id="CLU_061288_20_6_1"/>
<dbReference type="InParanoid" id="Q8RYK0"/>
<dbReference type="OrthoDB" id="26525at2759"/>
<dbReference type="Proteomes" id="UP000000763">
    <property type="component" value="Chromosome 1"/>
</dbReference>
<dbReference type="Proteomes" id="UP000059680">
    <property type="component" value="Chromosome 1"/>
</dbReference>
<dbReference type="GO" id="GO:0005509">
    <property type="term" value="F:calcium ion binding"/>
    <property type="evidence" value="ECO:0007669"/>
    <property type="project" value="InterPro"/>
</dbReference>
<dbReference type="CDD" id="cd00051">
    <property type="entry name" value="EFh"/>
    <property type="match status" value="2"/>
</dbReference>
<dbReference type="FunFam" id="1.10.238.10:FF:000292">
    <property type="entry name" value="Calcium-binding protein CML38"/>
    <property type="match status" value="1"/>
</dbReference>
<dbReference type="FunFam" id="1.10.238.10:FF:000003">
    <property type="entry name" value="Calmodulin A"/>
    <property type="match status" value="1"/>
</dbReference>
<dbReference type="Gene3D" id="1.10.238.10">
    <property type="entry name" value="EF-hand"/>
    <property type="match status" value="2"/>
</dbReference>
<dbReference type="InterPro" id="IPR011992">
    <property type="entry name" value="EF-hand-dom_pair"/>
</dbReference>
<dbReference type="InterPro" id="IPR018247">
    <property type="entry name" value="EF_Hand_1_Ca_BS"/>
</dbReference>
<dbReference type="InterPro" id="IPR002048">
    <property type="entry name" value="EF_hand_dom"/>
</dbReference>
<dbReference type="InterPro" id="IPR039647">
    <property type="entry name" value="EF_hand_pair_protein_CML-like"/>
</dbReference>
<dbReference type="PANTHER" id="PTHR10891">
    <property type="entry name" value="EF-HAND CALCIUM-BINDING DOMAIN CONTAINING PROTEIN"/>
    <property type="match status" value="1"/>
</dbReference>
<dbReference type="Pfam" id="PF13499">
    <property type="entry name" value="EF-hand_7"/>
    <property type="match status" value="2"/>
</dbReference>
<dbReference type="SMART" id="SM00054">
    <property type="entry name" value="EFh"/>
    <property type="match status" value="4"/>
</dbReference>
<dbReference type="SUPFAM" id="SSF47473">
    <property type="entry name" value="EF-hand"/>
    <property type="match status" value="1"/>
</dbReference>
<dbReference type="PROSITE" id="PS00018">
    <property type="entry name" value="EF_HAND_1"/>
    <property type="match status" value="3"/>
</dbReference>
<dbReference type="PROSITE" id="PS50222">
    <property type="entry name" value="EF_HAND_2"/>
    <property type="match status" value="4"/>
</dbReference>
<reference key="1">
    <citation type="journal article" date="2002" name="Nature">
        <title>The genome sequence and structure of rice chromosome 1.</title>
        <authorList>
            <person name="Sasaki T."/>
            <person name="Matsumoto T."/>
            <person name="Yamamoto K."/>
            <person name="Sakata K."/>
            <person name="Baba T."/>
            <person name="Katayose Y."/>
            <person name="Wu J."/>
            <person name="Niimura Y."/>
            <person name="Cheng Z."/>
            <person name="Nagamura Y."/>
            <person name="Antonio B.A."/>
            <person name="Kanamori H."/>
            <person name="Hosokawa S."/>
            <person name="Masukawa M."/>
            <person name="Arikawa K."/>
            <person name="Chiden Y."/>
            <person name="Hayashi M."/>
            <person name="Okamoto M."/>
            <person name="Ando T."/>
            <person name="Aoki H."/>
            <person name="Arita K."/>
            <person name="Hamada M."/>
            <person name="Harada C."/>
            <person name="Hijishita S."/>
            <person name="Honda M."/>
            <person name="Ichikawa Y."/>
            <person name="Idonuma A."/>
            <person name="Iijima M."/>
            <person name="Ikeda M."/>
            <person name="Ikeno M."/>
            <person name="Ito S."/>
            <person name="Ito T."/>
            <person name="Ito Y."/>
            <person name="Ito Y."/>
            <person name="Iwabuchi A."/>
            <person name="Kamiya K."/>
            <person name="Karasawa W."/>
            <person name="Katagiri S."/>
            <person name="Kikuta A."/>
            <person name="Kobayashi N."/>
            <person name="Kono I."/>
            <person name="Machita K."/>
            <person name="Maehara T."/>
            <person name="Mizuno H."/>
            <person name="Mizubayashi T."/>
            <person name="Mukai Y."/>
            <person name="Nagasaki H."/>
            <person name="Nakashima M."/>
            <person name="Nakama Y."/>
            <person name="Nakamichi Y."/>
            <person name="Nakamura M."/>
            <person name="Namiki N."/>
            <person name="Negishi M."/>
            <person name="Ohta I."/>
            <person name="Ono N."/>
            <person name="Saji S."/>
            <person name="Sakai K."/>
            <person name="Shibata M."/>
            <person name="Shimokawa T."/>
            <person name="Shomura A."/>
            <person name="Song J."/>
            <person name="Takazaki Y."/>
            <person name="Terasawa K."/>
            <person name="Tsuji K."/>
            <person name="Waki K."/>
            <person name="Yamagata H."/>
            <person name="Yamane H."/>
            <person name="Yoshiki S."/>
            <person name="Yoshihara R."/>
            <person name="Yukawa K."/>
            <person name="Zhong H."/>
            <person name="Iwama H."/>
            <person name="Endo T."/>
            <person name="Ito H."/>
            <person name="Hahn J.H."/>
            <person name="Kim H.-I."/>
            <person name="Eun M.-Y."/>
            <person name="Yano M."/>
            <person name="Jiang J."/>
            <person name="Gojobori T."/>
        </authorList>
    </citation>
    <scope>NUCLEOTIDE SEQUENCE [LARGE SCALE GENOMIC DNA]</scope>
    <source>
        <strain>cv. Nipponbare</strain>
    </source>
</reference>
<reference key="2">
    <citation type="journal article" date="2005" name="Nature">
        <title>The map-based sequence of the rice genome.</title>
        <authorList>
            <consortium name="International rice genome sequencing project (IRGSP)"/>
        </authorList>
    </citation>
    <scope>NUCLEOTIDE SEQUENCE [LARGE SCALE GENOMIC DNA]</scope>
    <source>
        <strain>cv. Nipponbare</strain>
    </source>
</reference>
<reference key="3">
    <citation type="journal article" date="2008" name="Nucleic Acids Res.">
        <title>The rice annotation project database (RAP-DB): 2008 update.</title>
        <authorList>
            <consortium name="The rice annotation project (RAP)"/>
        </authorList>
    </citation>
    <scope>GENOME REANNOTATION</scope>
    <source>
        <strain>cv. Nipponbare</strain>
    </source>
</reference>
<reference key="4">
    <citation type="journal article" date="2013" name="Rice">
        <title>Improvement of the Oryza sativa Nipponbare reference genome using next generation sequence and optical map data.</title>
        <authorList>
            <person name="Kawahara Y."/>
            <person name="de la Bastide M."/>
            <person name="Hamilton J.P."/>
            <person name="Kanamori H."/>
            <person name="McCombie W.R."/>
            <person name="Ouyang S."/>
            <person name="Schwartz D.C."/>
            <person name="Tanaka T."/>
            <person name="Wu J."/>
            <person name="Zhou S."/>
            <person name="Childs K.L."/>
            <person name="Davidson R.M."/>
            <person name="Lin H."/>
            <person name="Quesada-Ocampo L."/>
            <person name="Vaillancourt B."/>
            <person name="Sakai H."/>
            <person name="Lee S.S."/>
            <person name="Kim J."/>
            <person name="Numa H."/>
            <person name="Itoh T."/>
            <person name="Buell C.R."/>
            <person name="Matsumoto T."/>
        </authorList>
    </citation>
    <scope>GENOME REANNOTATION</scope>
    <source>
        <strain>cv. Nipponbare</strain>
    </source>
</reference>
<reference key="5">
    <citation type="journal article" date="2003" name="Science">
        <title>Collection, mapping, and annotation of over 28,000 cDNA clones from japonica rice.</title>
        <authorList>
            <consortium name="The rice full-length cDNA consortium"/>
        </authorList>
    </citation>
    <scope>NUCLEOTIDE SEQUENCE [LARGE SCALE MRNA]</scope>
    <source>
        <strain>cv. Nipponbare</strain>
    </source>
</reference>
<reference key="6">
    <citation type="journal article" date="2007" name="BMC Plant Biol.">
        <title>Genome-wide identification and analyses of the rice calmodulin and related potential calcium sensor proteins.</title>
        <authorList>
            <person name="Boonburapong B."/>
            <person name="Buaboocha T."/>
        </authorList>
    </citation>
    <scope>GENE FAMILY</scope>
    <scope>NOMENCLATURE</scope>
</reference>
<organism>
    <name type="scientific">Oryza sativa subsp. japonica</name>
    <name type="common">Rice</name>
    <dbReference type="NCBI Taxonomy" id="39947"/>
    <lineage>
        <taxon>Eukaryota</taxon>
        <taxon>Viridiplantae</taxon>
        <taxon>Streptophyta</taxon>
        <taxon>Embryophyta</taxon>
        <taxon>Tracheophyta</taxon>
        <taxon>Spermatophyta</taxon>
        <taxon>Magnoliopsida</taxon>
        <taxon>Liliopsida</taxon>
        <taxon>Poales</taxon>
        <taxon>Poaceae</taxon>
        <taxon>BOP clade</taxon>
        <taxon>Oryzoideae</taxon>
        <taxon>Oryzeae</taxon>
        <taxon>Oryzinae</taxon>
        <taxon>Oryza</taxon>
        <taxon>Oryza sativa</taxon>
    </lineage>
</organism>
<name>CML31_ORYSJ</name>
<sequence>MVVASAASPCESSALFATFDHDGDGRISAAELRLCMKTTLGEEVSDEEAGQLVASVDADGDGLLCEAEFVRLVQAAEVEEEDERRGTGLREAFGMYEMEGEGCITPTSLRRMLRRLGSDQDIDDCRAMICRFDLNGDGVLSFDEFKIMMNA</sequence>
<gene>
    <name type="primary">CML31</name>
    <name type="ordered locus">Os01g0955100</name>
    <name type="ordered locus">LOC_Os01g72530</name>
    <name type="ORF">B1139B11.15</name>
</gene>